<comment type="function">
    <text evidence="1">Can catalyze the hydrolysis of ATP in the presence of single-stranded DNA, the ATP-dependent uptake of single-stranded DNA by duplex DNA, and the ATP-dependent hybridization of homologous single-stranded DNAs. It interacts with LexA causing its activation and leading to its autocatalytic cleavage (By similarity).</text>
</comment>
<comment type="subcellular location">
    <subcellularLocation>
        <location evidence="1">Cytoplasm</location>
    </subcellularLocation>
</comment>
<comment type="PTM">
    <text evidence="1">This protein undergoes a protein self splicing that involves a post-translational excision of the intervening region (intein) followed by peptide ligation.</text>
</comment>
<comment type="similarity">
    <text evidence="3">Belongs to the RecA family.</text>
</comment>
<organism>
    <name type="scientific">Mycobacterium gastri</name>
    <dbReference type="NCBI Taxonomy" id="1777"/>
    <lineage>
        <taxon>Bacteria</taxon>
        <taxon>Bacillati</taxon>
        <taxon>Actinomycetota</taxon>
        <taxon>Actinomycetes</taxon>
        <taxon>Mycobacteriales</taxon>
        <taxon>Mycobacteriaceae</taxon>
        <taxon>Mycobacterium</taxon>
    </lineage>
</organism>
<sequence length="419" mass="46602">RDKIGVMFGCGSWYTNVTLADGSTEKLGKIVNQKMDVEVLSYDFESGQIVPRRVTNWFNNGKAEEFLHFKVDRAGSGTGRGHASLAMTRNHLIRTPVGWREAEDINVGDRVMLAQPRLLSDQQWEIVLGSLMGDGCLSPPVRQDSESARLRIGHGAQQSAYFDWKVSLLANIPHSRTVNGKGAAFVDFSPLAELHELRSAVYLGDGKKFLSEEYLKGLTPLSLAIWYMDDGSFSLRSKGLQQRTQGGSGRIEICVEAMSEGSQVRLRDYLHDTHGLDVRLRKAGAAAKAVLVFSTAATAKFQQLVAPYMAPCMAYKLLPRFHGRSMVTPQFVEPIMELMPARVTEIESKTDYPIMSRFDIEVEGSHNYFADGVMVHNSPETTTGGKALKFYASVRMDVQRIETLKDGTNTVDNRTRVKI</sequence>
<name>RECA_MYCGS</name>
<gene>
    <name type="primary">recA</name>
</gene>
<dbReference type="EMBL" id="AJ251715">
    <property type="protein sequence ID" value="CAC09591.1"/>
    <property type="molecule type" value="Genomic_DNA"/>
</dbReference>
<dbReference type="STRING" id="1777.AWC07_08025"/>
<dbReference type="GO" id="GO:0005829">
    <property type="term" value="C:cytosol"/>
    <property type="evidence" value="ECO:0007669"/>
    <property type="project" value="TreeGrafter"/>
</dbReference>
<dbReference type="GO" id="GO:0005524">
    <property type="term" value="F:ATP binding"/>
    <property type="evidence" value="ECO:0007669"/>
    <property type="project" value="UniProtKB-KW"/>
</dbReference>
<dbReference type="GO" id="GO:0008094">
    <property type="term" value="F:ATP-dependent activity, acting on DNA"/>
    <property type="evidence" value="ECO:0007669"/>
    <property type="project" value="InterPro"/>
</dbReference>
<dbReference type="GO" id="GO:0004519">
    <property type="term" value="F:endonuclease activity"/>
    <property type="evidence" value="ECO:0007669"/>
    <property type="project" value="InterPro"/>
</dbReference>
<dbReference type="GO" id="GO:0003697">
    <property type="term" value="F:single-stranded DNA binding"/>
    <property type="evidence" value="ECO:0007669"/>
    <property type="project" value="InterPro"/>
</dbReference>
<dbReference type="GO" id="GO:0006310">
    <property type="term" value="P:DNA recombination"/>
    <property type="evidence" value="ECO:0007669"/>
    <property type="project" value="UniProtKB-KW"/>
</dbReference>
<dbReference type="GO" id="GO:0006281">
    <property type="term" value="P:DNA repair"/>
    <property type="evidence" value="ECO:0007669"/>
    <property type="project" value="UniProtKB-KW"/>
</dbReference>
<dbReference type="GO" id="GO:0016539">
    <property type="term" value="P:intein-mediated protein splicing"/>
    <property type="evidence" value="ECO:0007669"/>
    <property type="project" value="InterPro"/>
</dbReference>
<dbReference type="GO" id="GO:0009432">
    <property type="term" value="P:SOS response"/>
    <property type="evidence" value="ECO:0007669"/>
    <property type="project" value="UniProtKB-KW"/>
</dbReference>
<dbReference type="CDD" id="cd00081">
    <property type="entry name" value="Hint"/>
    <property type="match status" value="1"/>
</dbReference>
<dbReference type="Gene3D" id="2.170.16.10">
    <property type="entry name" value="Hedgehog/Intein (Hint) domain"/>
    <property type="match status" value="1"/>
</dbReference>
<dbReference type="Gene3D" id="3.10.28.10">
    <property type="entry name" value="Homing endonucleases"/>
    <property type="match status" value="2"/>
</dbReference>
<dbReference type="Gene3D" id="3.40.50.300">
    <property type="entry name" value="P-loop containing nucleotide triphosphate hydrolases"/>
    <property type="match status" value="1"/>
</dbReference>
<dbReference type="InterPro" id="IPR013765">
    <property type="entry name" value="DNA_recomb/repair_RecA"/>
</dbReference>
<dbReference type="InterPro" id="IPR020584">
    <property type="entry name" value="DNA_recomb/repair_RecA_CS"/>
</dbReference>
<dbReference type="InterPro" id="IPR003586">
    <property type="entry name" value="Hint_dom_C"/>
</dbReference>
<dbReference type="InterPro" id="IPR003587">
    <property type="entry name" value="Hint_dom_N"/>
</dbReference>
<dbReference type="InterPro" id="IPR036844">
    <property type="entry name" value="Hint_dom_sf"/>
</dbReference>
<dbReference type="InterPro" id="IPR027434">
    <property type="entry name" value="Homing_endonucl"/>
</dbReference>
<dbReference type="InterPro" id="IPR006142">
    <property type="entry name" value="INTEIN"/>
</dbReference>
<dbReference type="InterPro" id="IPR030934">
    <property type="entry name" value="Intein_C"/>
</dbReference>
<dbReference type="InterPro" id="IPR006141">
    <property type="entry name" value="Intein_N"/>
</dbReference>
<dbReference type="InterPro" id="IPR004860">
    <property type="entry name" value="LAGLIDADG_dom"/>
</dbReference>
<dbReference type="InterPro" id="IPR027417">
    <property type="entry name" value="P-loop_NTPase"/>
</dbReference>
<dbReference type="InterPro" id="IPR049428">
    <property type="entry name" value="RecA-like_N"/>
</dbReference>
<dbReference type="InterPro" id="IPR020587">
    <property type="entry name" value="RecA_monomer-monomer_interface"/>
</dbReference>
<dbReference type="NCBIfam" id="TIGR01443">
    <property type="entry name" value="intein_Cterm"/>
    <property type="match status" value="1"/>
</dbReference>
<dbReference type="NCBIfam" id="TIGR01445">
    <property type="entry name" value="intein_Nterm"/>
    <property type="match status" value="1"/>
</dbReference>
<dbReference type="PANTHER" id="PTHR45900:SF1">
    <property type="entry name" value="MITOCHONDRIAL DNA REPAIR PROTEIN RECA HOMOLOG-RELATED"/>
    <property type="match status" value="1"/>
</dbReference>
<dbReference type="PANTHER" id="PTHR45900">
    <property type="entry name" value="RECA"/>
    <property type="match status" value="1"/>
</dbReference>
<dbReference type="Pfam" id="PF03161">
    <property type="entry name" value="LAGLIDADG_2"/>
    <property type="match status" value="1"/>
</dbReference>
<dbReference type="Pfam" id="PF00154">
    <property type="entry name" value="RecA"/>
    <property type="match status" value="1"/>
</dbReference>
<dbReference type="PRINTS" id="PR00379">
    <property type="entry name" value="INTEIN"/>
</dbReference>
<dbReference type="SMART" id="SM00305">
    <property type="entry name" value="HintC"/>
    <property type="match status" value="1"/>
</dbReference>
<dbReference type="SMART" id="SM00306">
    <property type="entry name" value="HintN"/>
    <property type="match status" value="1"/>
</dbReference>
<dbReference type="SUPFAM" id="SSF51294">
    <property type="entry name" value="Hedgehog/intein (Hint) domain"/>
    <property type="match status" value="1"/>
</dbReference>
<dbReference type="SUPFAM" id="SSF55608">
    <property type="entry name" value="Homing endonucleases"/>
    <property type="match status" value="1"/>
</dbReference>
<dbReference type="PROSITE" id="PS50818">
    <property type="entry name" value="INTEIN_C_TER"/>
    <property type="match status" value="1"/>
</dbReference>
<dbReference type="PROSITE" id="PS50817">
    <property type="entry name" value="INTEIN_N_TER"/>
    <property type="match status" value="1"/>
</dbReference>
<dbReference type="PROSITE" id="PS00321">
    <property type="entry name" value="RECA_1"/>
    <property type="match status" value="1"/>
</dbReference>
<dbReference type="PROSITE" id="PS50163">
    <property type="entry name" value="RECA_3"/>
    <property type="match status" value="1"/>
</dbReference>
<accession>Q9F414</accession>
<proteinExistence type="inferred from homology"/>
<reference key="1">
    <citation type="journal article" date="2000" name="FEBS Lett.">
        <title>Inteins invading mycobacterial RecA proteins.</title>
        <authorList>
            <person name="Saves I."/>
            <person name="Laneelle M.-A."/>
            <person name="Daffe M."/>
            <person name="Masson J.-M."/>
        </authorList>
    </citation>
    <scope>NUCLEOTIDE SEQUENCE [GENOMIC DNA]</scope>
    <source>
        <strain>HB4389</strain>
    </source>
</reference>
<keyword id="KW-0067">ATP-binding</keyword>
<keyword id="KW-0068">Autocatalytic cleavage</keyword>
<keyword id="KW-0963">Cytoplasm</keyword>
<keyword id="KW-0227">DNA damage</keyword>
<keyword id="KW-0233">DNA recombination</keyword>
<keyword id="KW-0234">DNA repair</keyword>
<keyword id="KW-0238">DNA-binding</keyword>
<keyword id="KW-0547">Nucleotide-binding</keyword>
<keyword id="KW-0651">Protein splicing</keyword>
<keyword id="KW-0742">SOS response</keyword>
<feature type="chain" id="PRO_0000030257" description="Protein RecA, 1st part" evidence="2">
    <location>
        <begin position="1" status="less than"/>
        <end position="9"/>
    </location>
</feature>
<feature type="chain" id="PRO_0000030258" description="Mga RecA intein" evidence="2">
    <location>
        <begin position="10"/>
        <end position="377"/>
    </location>
</feature>
<feature type="chain" id="PRO_0000030259" description="Protein RecA, 2nd part" evidence="2">
    <location>
        <begin position="378"/>
        <end position="419" status="greater than"/>
    </location>
</feature>
<feature type="non-terminal residue">
    <location>
        <position position="1"/>
    </location>
</feature>
<feature type="non-terminal residue">
    <location>
        <position position="419"/>
    </location>
</feature>
<protein>
    <recommendedName>
        <fullName>Protein RecA</fullName>
    </recommendedName>
    <alternativeName>
        <fullName>Recombinase A</fullName>
    </alternativeName>
    <component>
        <recommendedName>
            <fullName>Mga RecA intein</fullName>
        </recommendedName>
    </component>
</protein>
<evidence type="ECO:0000250" key="1"/>
<evidence type="ECO:0000255" key="2"/>
<evidence type="ECO:0000305" key="3"/>